<gene>
    <name evidence="2" type="primary">ldh1</name>
    <name type="synonym">lctE</name>
    <name type="synonym">ldhA</name>
    <name type="ordered locus">SA0232</name>
</gene>
<feature type="chain" id="PRO_0000168382" description="L-lactate dehydrogenase 1">
    <location>
        <begin position="1"/>
        <end position="317"/>
    </location>
</feature>
<feature type="active site" description="Proton acceptor" evidence="2">
    <location>
        <position position="179"/>
    </location>
</feature>
<feature type="binding site" evidence="2">
    <location>
        <position position="17"/>
    </location>
    <ligand>
        <name>NAD(+)</name>
        <dbReference type="ChEBI" id="CHEBI:57540"/>
    </ligand>
</feature>
<feature type="binding site" evidence="2">
    <location>
        <position position="38"/>
    </location>
    <ligand>
        <name>NAD(+)</name>
        <dbReference type="ChEBI" id="CHEBI:57540"/>
    </ligand>
</feature>
<feature type="binding site" evidence="2">
    <location>
        <position position="43"/>
    </location>
    <ligand>
        <name>NAD(+)</name>
        <dbReference type="ChEBI" id="CHEBI:57540"/>
    </ligand>
</feature>
<feature type="binding site" evidence="2">
    <location>
        <position position="69"/>
    </location>
    <ligand>
        <name>NAD(+)</name>
        <dbReference type="ChEBI" id="CHEBI:57540"/>
    </ligand>
</feature>
<feature type="binding site" evidence="2">
    <location>
        <begin position="83"/>
        <end position="84"/>
    </location>
    <ligand>
        <name>NAD(+)</name>
        <dbReference type="ChEBI" id="CHEBI:57540"/>
    </ligand>
</feature>
<feature type="binding site" evidence="2">
    <location>
        <position position="86"/>
    </location>
    <ligand>
        <name>substrate</name>
    </ligand>
</feature>
<feature type="binding site" evidence="2">
    <location>
        <position position="92"/>
    </location>
    <ligand>
        <name>substrate</name>
    </ligand>
</feature>
<feature type="binding site" evidence="2">
    <location>
        <position position="105"/>
    </location>
    <ligand>
        <name>NAD(+)</name>
        <dbReference type="ChEBI" id="CHEBI:57540"/>
    </ligand>
</feature>
<feature type="binding site" evidence="2">
    <location>
        <begin position="122"/>
        <end position="124"/>
    </location>
    <ligand>
        <name>NAD(+)</name>
        <dbReference type="ChEBI" id="CHEBI:57540"/>
    </ligand>
</feature>
<feature type="binding site" evidence="2">
    <location>
        <begin position="124"/>
        <end position="127"/>
    </location>
    <ligand>
        <name>substrate</name>
    </ligand>
</feature>
<feature type="binding site" evidence="2">
    <location>
        <position position="147"/>
    </location>
    <ligand>
        <name>NAD(+)</name>
        <dbReference type="ChEBI" id="CHEBI:57540"/>
    </ligand>
</feature>
<feature type="binding site" evidence="2">
    <location>
        <begin position="152"/>
        <end position="155"/>
    </location>
    <ligand>
        <name>substrate</name>
    </ligand>
</feature>
<feature type="binding site" evidence="2">
    <location>
        <position position="232"/>
    </location>
    <ligand>
        <name>substrate</name>
    </ligand>
</feature>
<feature type="modified residue" description="Phosphotyrosine" evidence="2">
    <location>
        <position position="223"/>
    </location>
</feature>
<organism>
    <name type="scientific">Staphylococcus aureus (strain N315)</name>
    <dbReference type="NCBI Taxonomy" id="158879"/>
    <lineage>
        <taxon>Bacteria</taxon>
        <taxon>Bacillati</taxon>
        <taxon>Bacillota</taxon>
        <taxon>Bacilli</taxon>
        <taxon>Bacillales</taxon>
        <taxon>Staphylococcaceae</taxon>
        <taxon>Staphylococcus</taxon>
    </lineage>
</organism>
<comment type="function">
    <text evidence="1 2">Catalyzes the conversion of lactate to pyruvate (Potential). Appears to be the primary factor that allows S.aureus growth during nitrosative stress in both aerobically and anaerobically cultured cells (By similarity).</text>
</comment>
<comment type="catalytic activity">
    <reaction evidence="2">
        <text>(S)-lactate + NAD(+) = pyruvate + NADH + H(+)</text>
        <dbReference type="Rhea" id="RHEA:23444"/>
        <dbReference type="ChEBI" id="CHEBI:15361"/>
        <dbReference type="ChEBI" id="CHEBI:15378"/>
        <dbReference type="ChEBI" id="CHEBI:16651"/>
        <dbReference type="ChEBI" id="CHEBI:57540"/>
        <dbReference type="ChEBI" id="CHEBI:57945"/>
        <dbReference type="EC" id="1.1.1.27"/>
    </reaction>
</comment>
<comment type="pathway">
    <text evidence="2">Fermentation; pyruvate fermentation to lactate; (S)-lactate from pyruvate: step 1/1.</text>
</comment>
<comment type="subunit">
    <text evidence="2">Homotetramer.</text>
</comment>
<comment type="subcellular location">
    <subcellularLocation>
        <location evidence="2">Cytoplasm</location>
    </subcellularLocation>
</comment>
<comment type="similarity">
    <text evidence="2 3">Belongs to the LDH/MDH superfamily. LDH family.</text>
</comment>
<reference key="1">
    <citation type="journal article" date="2001" name="Lancet">
        <title>Whole genome sequencing of meticillin-resistant Staphylococcus aureus.</title>
        <authorList>
            <person name="Kuroda M."/>
            <person name="Ohta T."/>
            <person name="Uchiyama I."/>
            <person name="Baba T."/>
            <person name="Yuzawa H."/>
            <person name="Kobayashi I."/>
            <person name="Cui L."/>
            <person name="Oguchi A."/>
            <person name="Aoki K."/>
            <person name="Nagai Y."/>
            <person name="Lian J.-Q."/>
            <person name="Ito T."/>
            <person name="Kanamori M."/>
            <person name="Matsumaru H."/>
            <person name="Maruyama A."/>
            <person name="Murakami H."/>
            <person name="Hosoyama A."/>
            <person name="Mizutani-Ui Y."/>
            <person name="Takahashi N.K."/>
            <person name="Sawano T."/>
            <person name="Inoue R."/>
            <person name="Kaito C."/>
            <person name="Sekimizu K."/>
            <person name="Hirakawa H."/>
            <person name="Kuhara S."/>
            <person name="Goto S."/>
            <person name="Yabuzaki J."/>
            <person name="Kanehisa M."/>
            <person name="Yamashita A."/>
            <person name="Oshima K."/>
            <person name="Furuya K."/>
            <person name="Yoshino C."/>
            <person name="Shiba T."/>
            <person name="Hattori M."/>
            <person name="Ogasawara N."/>
            <person name="Hayashi H."/>
            <person name="Hiramatsu K."/>
        </authorList>
    </citation>
    <scope>NUCLEOTIDE SEQUENCE [LARGE SCALE GENOMIC DNA]</scope>
    <source>
        <strain>N315</strain>
    </source>
</reference>
<reference key="2">
    <citation type="submission" date="2005-11" db="UniProtKB">
        <title>Shotgun proteomic analysis of total protein extract of S. aureus S30 versus N315.</title>
        <authorList>
            <person name="Stenz L."/>
        </authorList>
    </citation>
    <scope>IDENTIFICATION BY MASS SPECTROMETRY</scope>
</reference>
<reference key="3">
    <citation type="submission" date="2007-10" db="UniProtKB">
        <title>Shotgun proteomic analysis of total and membrane protein extracts of S. aureus strain N315.</title>
        <authorList>
            <person name="Vaezzadeh A.R."/>
            <person name="Deshusses J."/>
            <person name="Lescuyer P."/>
            <person name="Hochstrasser D.F."/>
        </authorList>
    </citation>
    <scope>IDENTIFICATION BY MASS SPECTROMETRY [LARGE SCALE ANALYSIS]</scope>
    <source>
        <strain>N315</strain>
    </source>
</reference>
<accession>P65256</accession>
<accession>Q99WY2</accession>
<sequence length="317" mass="34569">MNKFKGNKVVLIGNGAVGSSYAFSLVNQSIVDELVIIDLDTEKVRGDVMDLKHATPYSPTTVRVKAGEYSDCHDADLVVICAGAAQKPGETRLDLVSKNLKIFKSIVGEVMASKFDGIFLVATNPVDILAYATWKFSGLPKERVIGSGTILDSARFRLLLSEAFDVAPRSVDAQIIGEHGDTELPVWSHANIAGQPLKTLLEQRPEGKAQIEQIFVQTRDAAYDIIQAKGATYYGVAMGLARITEAIFRNEDAVLTVSALLEGEYDEEDVYIGVPAVINRNGIRNVVEIPLNDEEQSKFAHSAKTLKDIMAEAEELK</sequence>
<proteinExistence type="evidence at protein level"/>
<dbReference type="EC" id="1.1.1.27" evidence="2"/>
<dbReference type="EMBL" id="BA000018">
    <property type="protein sequence ID" value="BAB41455.1"/>
    <property type="molecule type" value="Genomic_DNA"/>
</dbReference>
<dbReference type="PIR" id="D89787">
    <property type="entry name" value="D89787"/>
</dbReference>
<dbReference type="RefSeq" id="WP_001031880.1">
    <property type="nucleotide sequence ID" value="NC_002745.2"/>
</dbReference>
<dbReference type="SMR" id="P65256"/>
<dbReference type="EnsemblBacteria" id="BAB41455">
    <property type="protein sequence ID" value="BAB41455"/>
    <property type="gene ID" value="BAB41455"/>
</dbReference>
<dbReference type="KEGG" id="sau:SA0232"/>
<dbReference type="HOGENOM" id="CLU_045401_1_1_9"/>
<dbReference type="UniPathway" id="UPA00554">
    <property type="reaction ID" value="UER00611"/>
</dbReference>
<dbReference type="GO" id="GO:0005737">
    <property type="term" value="C:cytoplasm"/>
    <property type="evidence" value="ECO:0007669"/>
    <property type="project" value="UniProtKB-SubCell"/>
</dbReference>
<dbReference type="GO" id="GO:0004459">
    <property type="term" value="F:L-lactate dehydrogenase activity"/>
    <property type="evidence" value="ECO:0007669"/>
    <property type="project" value="UniProtKB-UniRule"/>
</dbReference>
<dbReference type="GO" id="GO:0006096">
    <property type="term" value="P:glycolytic process"/>
    <property type="evidence" value="ECO:0007669"/>
    <property type="project" value="UniProtKB-UniRule"/>
</dbReference>
<dbReference type="GO" id="GO:0006089">
    <property type="term" value="P:lactate metabolic process"/>
    <property type="evidence" value="ECO:0007669"/>
    <property type="project" value="TreeGrafter"/>
</dbReference>
<dbReference type="CDD" id="cd05291">
    <property type="entry name" value="HicDH_like"/>
    <property type="match status" value="1"/>
</dbReference>
<dbReference type="FunFam" id="3.40.50.720:FF:000018">
    <property type="entry name" value="Malate dehydrogenase"/>
    <property type="match status" value="1"/>
</dbReference>
<dbReference type="Gene3D" id="3.90.110.10">
    <property type="entry name" value="Lactate dehydrogenase/glycoside hydrolase, family 4, C-terminal"/>
    <property type="match status" value="1"/>
</dbReference>
<dbReference type="Gene3D" id="3.40.50.720">
    <property type="entry name" value="NAD(P)-binding Rossmann-like Domain"/>
    <property type="match status" value="1"/>
</dbReference>
<dbReference type="HAMAP" id="MF_00488">
    <property type="entry name" value="Lactate_dehydrog"/>
    <property type="match status" value="1"/>
</dbReference>
<dbReference type="InterPro" id="IPR001557">
    <property type="entry name" value="L-lactate/malate_DH"/>
</dbReference>
<dbReference type="InterPro" id="IPR011304">
    <property type="entry name" value="L-lactate_DH"/>
</dbReference>
<dbReference type="InterPro" id="IPR018177">
    <property type="entry name" value="L-lactate_DH_AS"/>
</dbReference>
<dbReference type="InterPro" id="IPR022383">
    <property type="entry name" value="Lactate/malate_DH_C"/>
</dbReference>
<dbReference type="InterPro" id="IPR001236">
    <property type="entry name" value="Lactate/malate_DH_N"/>
</dbReference>
<dbReference type="InterPro" id="IPR015955">
    <property type="entry name" value="Lactate_DH/Glyco_Ohase_4_C"/>
</dbReference>
<dbReference type="InterPro" id="IPR036291">
    <property type="entry name" value="NAD(P)-bd_dom_sf"/>
</dbReference>
<dbReference type="NCBIfam" id="TIGR01771">
    <property type="entry name" value="L-LDH-NAD"/>
    <property type="match status" value="1"/>
</dbReference>
<dbReference type="NCBIfam" id="NF000824">
    <property type="entry name" value="PRK00066.1"/>
    <property type="match status" value="1"/>
</dbReference>
<dbReference type="NCBIfam" id="NF004863">
    <property type="entry name" value="PRK06223.1"/>
    <property type="match status" value="1"/>
</dbReference>
<dbReference type="PANTHER" id="PTHR43128">
    <property type="entry name" value="L-2-HYDROXYCARBOXYLATE DEHYDROGENASE (NAD(P)(+))"/>
    <property type="match status" value="1"/>
</dbReference>
<dbReference type="PANTHER" id="PTHR43128:SF16">
    <property type="entry name" value="L-LACTATE DEHYDROGENASE"/>
    <property type="match status" value="1"/>
</dbReference>
<dbReference type="Pfam" id="PF02866">
    <property type="entry name" value="Ldh_1_C"/>
    <property type="match status" value="1"/>
</dbReference>
<dbReference type="Pfam" id="PF00056">
    <property type="entry name" value="Ldh_1_N"/>
    <property type="match status" value="1"/>
</dbReference>
<dbReference type="PIRSF" id="PIRSF000102">
    <property type="entry name" value="Lac_mal_DH"/>
    <property type="match status" value="1"/>
</dbReference>
<dbReference type="PRINTS" id="PR00086">
    <property type="entry name" value="LLDHDRGNASE"/>
</dbReference>
<dbReference type="SUPFAM" id="SSF56327">
    <property type="entry name" value="LDH C-terminal domain-like"/>
    <property type="match status" value="1"/>
</dbReference>
<dbReference type="SUPFAM" id="SSF51735">
    <property type="entry name" value="NAD(P)-binding Rossmann-fold domains"/>
    <property type="match status" value="1"/>
</dbReference>
<dbReference type="PROSITE" id="PS00064">
    <property type="entry name" value="L_LDH"/>
    <property type="match status" value="1"/>
</dbReference>
<name>LDH1_STAAN</name>
<keyword id="KW-0963">Cytoplasm</keyword>
<keyword id="KW-0520">NAD</keyword>
<keyword id="KW-0560">Oxidoreductase</keyword>
<keyword id="KW-0597">Phosphoprotein</keyword>
<keyword id="KW-0346">Stress response</keyword>
<evidence type="ECO:0000250" key="1">
    <source>
        <dbReference type="UniProtKB" id="Q5HJD7"/>
    </source>
</evidence>
<evidence type="ECO:0000255" key="2">
    <source>
        <dbReference type="HAMAP-Rule" id="MF_00488"/>
    </source>
</evidence>
<evidence type="ECO:0000305" key="3"/>
<protein>
    <recommendedName>
        <fullName evidence="2">L-lactate dehydrogenase 1</fullName>
        <shortName evidence="2">L-LDH 1</shortName>
        <ecNumber evidence="2">1.1.1.27</ecNumber>
    </recommendedName>
</protein>